<organism>
    <name type="scientific">Chlorobium phaeobacteroides (strain DSM 266 / SMG 266 / 2430)</name>
    <dbReference type="NCBI Taxonomy" id="290317"/>
    <lineage>
        <taxon>Bacteria</taxon>
        <taxon>Pseudomonadati</taxon>
        <taxon>Chlorobiota</taxon>
        <taxon>Chlorobiia</taxon>
        <taxon>Chlorobiales</taxon>
        <taxon>Chlorobiaceae</taxon>
        <taxon>Chlorobium/Pelodictyon group</taxon>
        <taxon>Chlorobium</taxon>
    </lineage>
</organism>
<name>PYRE_CHLPD</name>
<accession>A1BJI2</accession>
<proteinExistence type="inferred from homology"/>
<gene>
    <name evidence="1" type="primary">pyrE</name>
    <name type="ordered locus">Cpha266_2571</name>
</gene>
<sequence length="193" mass="20697">MNQPPMLDIFRSTGALLEGHFKLTSGRHSNTYFQCAKVLQHPEHLSAVCHKIAAHFSQKGVDTVISPAIGGIVAGTETGRQLGVKTIFAERKDGRMTIRRGFSVAPGEKVLVIEDVITTGGSVQEVIELLKNAGALIIGVGCVVDRSNGKVRLTDDQYAVLSMEVVSYAPEECPLCKEGMPIDAPGSRANQQP</sequence>
<evidence type="ECO:0000255" key="1">
    <source>
        <dbReference type="HAMAP-Rule" id="MF_01208"/>
    </source>
</evidence>
<keyword id="KW-0328">Glycosyltransferase</keyword>
<keyword id="KW-0460">Magnesium</keyword>
<keyword id="KW-0665">Pyrimidine biosynthesis</keyword>
<keyword id="KW-1185">Reference proteome</keyword>
<keyword id="KW-0808">Transferase</keyword>
<reference key="1">
    <citation type="submission" date="2006-12" db="EMBL/GenBank/DDBJ databases">
        <title>Complete sequence of Chlorobium phaeobacteroides DSM 266.</title>
        <authorList>
            <consortium name="US DOE Joint Genome Institute"/>
            <person name="Copeland A."/>
            <person name="Lucas S."/>
            <person name="Lapidus A."/>
            <person name="Barry K."/>
            <person name="Detter J.C."/>
            <person name="Glavina del Rio T."/>
            <person name="Hammon N."/>
            <person name="Israni S."/>
            <person name="Pitluck S."/>
            <person name="Goltsman E."/>
            <person name="Schmutz J."/>
            <person name="Larimer F."/>
            <person name="Land M."/>
            <person name="Hauser L."/>
            <person name="Mikhailova N."/>
            <person name="Li T."/>
            <person name="Overmann J."/>
            <person name="Bryant D.A."/>
            <person name="Richardson P."/>
        </authorList>
    </citation>
    <scope>NUCLEOTIDE SEQUENCE [LARGE SCALE GENOMIC DNA]</scope>
    <source>
        <strain>DSM 266 / SMG 266 / 2430</strain>
    </source>
</reference>
<protein>
    <recommendedName>
        <fullName evidence="1">Orotate phosphoribosyltransferase</fullName>
        <shortName evidence="1">OPRT</shortName>
        <shortName evidence="1">OPRTase</shortName>
        <ecNumber evidence="1">2.4.2.10</ecNumber>
    </recommendedName>
</protein>
<comment type="function">
    <text evidence="1">Catalyzes the transfer of a ribosyl phosphate group from 5-phosphoribose 1-diphosphate to orotate, leading to the formation of orotidine monophosphate (OMP).</text>
</comment>
<comment type="catalytic activity">
    <reaction evidence="1">
        <text>orotidine 5'-phosphate + diphosphate = orotate + 5-phospho-alpha-D-ribose 1-diphosphate</text>
        <dbReference type="Rhea" id="RHEA:10380"/>
        <dbReference type="ChEBI" id="CHEBI:30839"/>
        <dbReference type="ChEBI" id="CHEBI:33019"/>
        <dbReference type="ChEBI" id="CHEBI:57538"/>
        <dbReference type="ChEBI" id="CHEBI:58017"/>
        <dbReference type="EC" id="2.4.2.10"/>
    </reaction>
</comment>
<comment type="cofactor">
    <cofactor evidence="1">
        <name>Mg(2+)</name>
        <dbReference type="ChEBI" id="CHEBI:18420"/>
    </cofactor>
</comment>
<comment type="pathway">
    <text evidence="1">Pyrimidine metabolism; UMP biosynthesis via de novo pathway; UMP from orotate: step 1/2.</text>
</comment>
<comment type="subunit">
    <text evidence="1">Homodimer.</text>
</comment>
<comment type="similarity">
    <text evidence="1">Belongs to the purine/pyrimidine phosphoribosyltransferase family. PyrE subfamily.</text>
</comment>
<dbReference type="EC" id="2.4.2.10" evidence="1"/>
<dbReference type="EMBL" id="CP000492">
    <property type="protein sequence ID" value="ABL66559.1"/>
    <property type="molecule type" value="Genomic_DNA"/>
</dbReference>
<dbReference type="RefSeq" id="WP_011746334.1">
    <property type="nucleotide sequence ID" value="NC_008639.1"/>
</dbReference>
<dbReference type="SMR" id="A1BJI2"/>
<dbReference type="STRING" id="290317.Cpha266_2571"/>
<dbReference type="KEGG" id="cph:Cpha266_2571"/>
<dbReference type="eggNOG" id="COG0461">
    <property type="taxonomic scope" value="Bacteria"/>
</dbReference>
<dbReference type="HOGENOM" id="CLU_074878_3_0_10"/>
<dbReference type="UniPathway" id="UPA00070">
    <property type="reaction ID" value="UER00119"/>
</dbReference>
<dbReference type="Proteomes" id="UP000008701">
    <property type="component" value="Chromosome"/>
</dbReference>
<dbReference type="GO" id="GO:0000287">
    <property type="term" value="F:magnesium ion binding"/>
    <property type="evidence" value="ECO:0007669"/>
    <property type="project" value="UniProtKB-UniRule"/>
</dbReference>
<dbReference type="GO" id="GO:0004588">
    <property type="term" value="F:orotate phosphoribosyltransferase activity"/>
    <property type="evidence" value="ECO:0007669"/>
    <property type="project" value="UniProtKB-UniRule"/>
</dbReference>
<dbReference type="GO" id="GO:0044205">
    <property type="term" value="P:'de novo' UMP biosynthetic process"/>
    <property type="evidence" value="ECO:0007669"/>
    <property type="project" value="UniProtKB-UniRule"/>
</dbReference>
<dbReference type="GO" id="GO:0019856">
    <property type="term" value="P:pyrimidine nucleobase biosynthetic process"/>
    <property type="evidence" value="ECO:0007669"/>
    <property type="project" value="InterPro"/>
</dbReference>
<dbReference type="CDD" id="cd06223">
    <property type="entry name" value="PRTases_typeI"/>
    <property type="match status" value="1"/>
</dbReference>
<dbReference type="Gene3D" id="3.40.50.2020">
    <property type="match status" value="1"/>
</dbReference>
<dbReference type="HAMAP" id="MF_01208">
    <property type="entry name" value="PyrE"/>
    <property type="match status" value="1"/>
</dbReference>
<dbReference type="InterPro" id="IPR023031">
    <property type="entry name" value="OPRT"/>
</dbReference>
<dbReference type="InterPro" id="IPR006273">
    <property type="entry name" value="Orotate_PRibTrfase_bac"/>
</dbReference>
<dbReference type="InterPro" id="IPR000836">
    <property type="entry name" value="PRibTrfase_dom"/>
</dbReference>
<dbReference type="InterPro" id="IPR029057">
    <property type="entry name" value="PRTase-like"/>
</dbReference>
<dbReference type="NCBIfam" id="TIGR01367">
    <property type="entry name" value="pyrE_Therm"/>
    <property type="match status" value="1"/>
</dbReference>
<dbReference type="PANTHER" id="PTHR19278">
    <property type="entry name" value="OROTATE PHOSPHORIBOSYLTRANSFERASE"/>
    <property type="match status" value="1"/>
</dbReference>
<dbReference type="PANTHER" id="PTHR19278:SF9">
    <property type="entry name" value="URIDINE 5'-MONOPHOSPHATE SYNTHASE"/>
    <property type="match status" value="1"/>
</dbReference>
<dbReference type="Pfam" id="PF00156">
    <property type="entry name" value="Pribosyltran"/>
    <property type="match status" value="1"/>
</dbReference>
<dbReference type="SUPFAM" id="SSF53271">
    <property type="entry name" value="PRTase-like"/>
    <property type="match status" value="1"/>
</dbReference>
<dbReference type="PROSITE" id="PS00103">
    <property type="entry name" value="PUR_PYR_PR_TRANSFER"/>
    <property type="match status" value="1"/>
</dbReference>
<feature type="chain" id="PRO_1000138773" description="Orotate phosphoribosyltransferase">
    <location>
        <begin position="1"/>
        <end position="193"/>
    </location>
</feature>
<feature type="binding site" evidence="1">
    <location>
        <begin position="114"/>
        <end position="122"/>
    </location>
    <ligand>
        <name>5-phospho-alpha-D-ribose 1-diphosphate</name>
        <dbReference type="ChEBI" id="CHEBI:58017"/>
    </ligand>
</feature>
<feature type="binding site" evidence="1">
    <location>
        <position position="118"/>
    </location>
    <ligand>
        <name>orotate</name>
        <dbReference type="ChEBI" id="CHEBI:30839"/>
    </ligand>
</feature>
<feature type="binding site" evidence="1">
    <location>
        <position position="146"/>
    </location>
    <ligand>
        <name>orotate</name>
        <dbReference type="ChEBI" id="CHEBI:30839"/>
    </ligand>
</feature>